<reference key="1">
    <citation type="journal article" date="1995" name="Science">
        <title>The minimal gene complement of Mycoplasma genitalium.</title>
        <authorList>
            <person name="Fraser C.M."/>
            <person name="Gocayne J.D."/>
            <person name="White O."/>
            <person name="Adams M.D."/>
            <person name="Clayton R.A."/>
            <person name="Fleischmann R.D."/>
            <person name="Bult C.J."/>
            <person name="Kerlavage A.R."/>
            <person name="Sutton G.G."/>
            <person name="Kelley J.M."/>
            <person name="Fritchman J.L."/>
            <person name="Weidman J.F."/>
            <person name="Small K.V."/>
            <person name="Sandusky M."/>
            <person name="Fuhrmann J.L."/>
            <person name="Nguyen D.T."/>
            <person name="Utterback T.R."/>
            <person name="Saudek D.M."/>
            <person name="Phillips C.A."/>
            <person name="Merrick J.M."/>
            <person name="Tomb J.-F."/>
            <person name="Dougherty B.A."/>
            <person name="Bott K.F."/>
            <person name="Hu P.-C."/>
            <person name="Lucier T.S."/>
            <person name="Peterson S.N."/>
            <person name="Smith H.O."/>
            <person name="Hutchison C.A. III"/>
            <person name="Venter J.C."/>
        </authorList>
    </citation>
    <scope>NUCLEOTIDE SEQUENCE [LARGE SCALE GENOMIC DNA]</scope>
    <source>
        <strain>ATCC 33530 / DSM 19775 / NCTC 10195 / G37</strain>
    </source>
</reference>
<proteinExistence type="inferred from homology"/>
<dbReference type="EMBL" id="L43967">
    <property type="protein sequence ID" value="AAC71259.1"/>
    <property type="molecule type" value="Genomic_DNA"/>
</dbReference>
<dbReference type="PIR" id="G64204">
    <property type="entry name" value="G64204"/>
</dbReference>
<dbReference type="RefSeq" id="WP_010869304.1">
    <property type="nucleotide sequence ID" value="NC_000908.2"/>
</dbReference>
<dbReference type="SMR" id="P47289"/>
<dbReference type="STRING" id="243273.MG_043"/>
<dbReference type="GeneID" id="88282158"/>
<dbReference type="KEGG" id="mge:MG_043"/>
<dbReference type="eggNOG" id="COG1176">
    <property type="taxonomic scope" value="Bacteria"/>
</dbReference>
<dbReference type="HOGENOM" id="CLU_016047_18_8_14"/>
<dbReference type="InParanoid" id="P47289"/>
<dbReference type="OrthoDB" id="9807047at2"/>
<dbReference type="BioCyc" id="MGEN243273:G1GJ2-43-MONOMER"/>
<dbReference type="Proteomes" id="UP000000807">
    <property type="component" value="Chromosome"/>
</dbReference>
<dbReference type="GO" id="GO:0005886">
    <property type="term" value="C:plasma membrane"/>
    <property type="evidence" value="ECO:0007669"/>
    <property type="project" value="UniProtKB-SubCell"/>
</dbReference>
<dbReference type="GO" id="GO:0055085">
    <property type="term" value="P:transmembrane transport"/>
    <property type="evidence" value="ECO:0007669"/>
    <property type="project" value="InterPro"/>
</dbReference>
<dbReference type="CDD" id="cd06261">
    <property type="entry name" value="TM_PBP2"/>
    <property type="match status" value="1"/>
</dbReference>
<dbReference type="Gene3D" id="1.10.3720.10">
    <property type="entry name" value="MetI-like"/>
    <property type="match status" value="1"/>
</dbReference>
<dbReference type="InterPro" id="IPR000515">
    <property type="entry name" value="MetI-like"/>
</dbReference>
<dbReference type="InterPro" id="IPR035906">
    <property type="entry name" value="MetI-like_sf"/>
</dbReference>
<dbReference type="PANTHER" id="PTHR42929:SF1">
    <property type="entry name" value="INNER MEMBRANE ABC TRANSPORTER PERMEASE PROTEIN YDCU-RELATED"/>
    <property type="match status" value="1"/>
</dbReference>
<dbReference type="PANTHER" id="PTHR42929">
    <property type="entry name" value="INNER MEMBRANE ABC TRANSPORTER PERMEASE PROTEIN YDCU-RELATED-RELATED"/>
    <property type="match status" value="1"/>
</dbReference>
<dbReference type="SUPFAM" id="SSF161098">
    <property type="entry name" value="MetI-like"/>
    <property type="match status" value="1"/>
</dbReference>
<dbReference type="PROSITE" id="PS50928">
    <property type="entry name" value="ABC_TM1"/>
    <property type="match status" value="1"/>
</dbReference>
<comment type="function">
    <text evidence="1">Required for the activity of the bacterial transport system of putrescine and spermidine.</text>
</comment>
<comment type="subcellular location">
    <subcellularLocation>
        <location evidence="3">Cell membrane</location>
        <topology evidence="2">Multi-pass membrane protein</topology>
    </subcellularLocation>
</comment>
<comment type="similarity">
    <text evidence="3">Belongs to the binding-protein-dependent transport system permease family. CysTW subfamily.</text>
</comment>
<sequence>MHIKKKYWLLLPFFLLMTIFFIIPMAWIIVSGLQSEDGASISQKYEPLVSGLGFFNSFWTSLWISIVTVIVALLFSFPFCYFLSQSKNKIFKAFVISIATVPIWSSFLIKLIGLKTLLDLLIGLSLNRVGDNNLTFGSGYTLLGTIYLFTPFMFLPLYNHFCVLPKNLLLASQDLGYNWIYSFVKVVIPFSKTAMLSGIALTFFPALTSVAIAQFLDNSNQAETLGNYIFTLGNNGYDSAIERGRAAGAIIIAALITFAIYFTVVFLPKIVRIVHNKWKQHEKAF</sequence>
<protein>
    <recommendedName>
        <fullName>Spermidine/putrescine transport system permease protein PotB homolog</fullName>
    </recommendedName>
</protein>
<name>POTB_MYCGE</name>
<gene>
    <name type="primary">potB</name>
    <name type="ordered locus">MG043</name>
</gene>
<keyword id="KW-1003">Cell membrane</keyword>
<keyword id="KW-0472">Membrane</keyword>
<keyword id="KW-1185">Reference proteome</keyword>
<keyword id="KW-0812">Transmembrane</keyword>
<keyword id="KW-1133">Transmembrane helix</keyword>
<keyword id="KW-0813">Transport</keyword>
<feature type="chain" id="PRO_0000060179" description="Spermidine/putrescine transport system permease protein PotB homolog">
    <location>
        <begin position="1"/>
        <end position="285"/>
    </location>
</feature>
<feature type="transmembrane region" description="Helical" evidence="2">
    <location>
        <begin position="10"/>
        <end position="30"/>
    </location>
</feature>
<feature type="transmembrane region" description="Helical" evidence="2">
    <location>
        <begin position="62"/>
        <end position="82"/>
    </location>
</feature>
<feature type="transmembrane region" description="Helical" evidence="2">
    <location>
        <begin position="94"/>
        <end position="114"/>
    </location>
</feature>
<feature type="transmembrane region" description="Helical" evidence="2">
    <location>
        <begin position="136"/>
        <end position="156"/>
    </location>
</feature>
<feature type="transmembrane region" description="Helical" evidence="2">
    <location>
        <begin position="196"/>
        <end position="216"/>
    </location>
</feature>
<feature type="transmembrane region" description="Helical" evidence="2">
    <location>
        <begin position="247"/>
        <end position="267"/>
    </location>
</feature>
<feature type="domain" description="ABC transmembrane type-1" evidence="2">
    <location>
        <begin position="58"/>
        <end position="268"/>
    </location>
</feature>
<organism>
    <name type="scientific">Mycoplasma genitalium (strain ATCC 33530 / DSM 19775 / NCTC 10195 / G37)</name>
    <name type="common">Mycoplasmoides genitalium</name>
    <dbReference type="NCBI Taxonomy" id="243273"/>
    <lineage>
        <taxon>Bacteria</taxon>
        <taxon>Bacillati</taxon>
        <taxon>Mycoplasmatota</taxon>
        <taxon>Mycoplasmoidales</taxon>
        <taxon>Mycoplasmoidaceae</taxon>
        <taxon>Mycoplasmoides</taxon>
    </lineage>
</organism>
<evidence type="ECO:0000250" key="1"/>
<evidence type="ECO:0000255" key="2">
    <source>
        <dbReference type="PROSITE-ProRule" id="PRU00441"/>
    </source>
</evidence>
<evidence type="ECO:0000305" key="3"/>
<accession>P47289</accession>